<accession>C0HKM3</accession>
<reference evidence="8" key="1">
    <citation type="journal article" date="2017" name="J. Proteomics">
        <title>Isolation and characterization of Conohyal-P1, a hyaluronidase from the injected venom of Conus purpurascens.</title>
        <authorList>
            <person name="Moeller C."/>
            <person name="Clark E."/>
            <person name="Safavi-Hemani H."/>
            <person name="DeCaprio A."/>
            <person name="Mari F."/>
        </authorList>
    </citation>
    <scope>NUCLEOTIDE SEQUENCE [MRNA]</scope>
    <scope>PROTEIN SEQUENCE OF 89-109; 220-228; 330-353 AND 418-430</scope>
    <scope>FUNCTION</scope>
    <scope>CATALYTIC ACTIVITY</scope>
    <scope>SUBCELLULAR LOCATION</scope>
    <scope>TISSUE SPECIFICITY</scope>
    <scope>MASS SPECTROMETRY</scope>
    <scope>IDENTIFICATION BY MASS SPECTROMETRY</scope>
    <scope>GLYCOSYLATION AT ASN-141; ASN-261; ASN-337 AND ASN-359</scope>
    <source>
        <tissue evidence="7">Venom</tissue>
        <tissue evidence="7">Venom duct</tissue>
    </source>
</reference>
<keyword id="KW-0903">Direct protein sequencing</keyword>
<keyword id="KW-1015">Disulfide bond</keyword>
<keyword id="KW-0245">EGF-like domain</keyword>
<keyword id="KW-0325">Glycoprotein</keyword>
<keyword id="KW-0326">Glycosidase</keyword>
<keyword id="KW-0378">Hydrolase</keyword>
<keyword id="KW-0964">Secreted</keyword>
<keyword id="KW-0732">Signal</keyword>
<feature type="signal peptide" evidence="6">
    <location>
        <begin position="1"/>
        <end position="18"/>
    </location>
</feature>
<feature type="chain" id="PRO_0000440946" description="Hyaluronidase conohyal-P1" evidence="3">
    <location>
        <begin position="19"/>
        <end position="458"/>
    </location>
</feature>
<feature type="domain" description="EGF-like" evidence="2">
    <location>
        <begin position="363"/>
        <end position="434"/>
    </location>
</feature>
<feature type="region of interest" description="Disordered" evidence="5">
    <location>
        <begin position="24"/>
        <end position="47"/>
    </location>
</feature>
<feature type="compositionally biased region" description="Low complexity" evidence="5">
    <location>
        <begin position="28"/>
        <end position="43"/>
    </location>
</feature>
<feature type="active site" description="Proton donor" evidence="2">
    <location>
        <position position="151"/>
    </location>
</feature>
<feature type="glycosylation site" description="N-linked (GlcNAc...) asparagine" evidence="4">
    <location>
        <position position="106"/>
    </location>
</feature>
<feature type="glycosylation site" description="N-linked (GlcNAc...) asparagine" evidence="6">
    <location>
        <position position="141"/>
    </location>
</feature>
<feature type="glycosylation site" description="N-linked (GlcNAc...) asparagine" evidence="6">
    <location>
        <position position="261"/>
    </location>
</feature>
<feature type="glycosylation site" description="N-linked (GlcNAc...) asparagine" evidence="6">
    <location>
        <position position="337"/>
    </location>
</feature>
<feature type="glycosylation site" description="N-linked (GlcNAc...) asparagine" evidence="6">
    <location>
        <position position="359"/>
    </location>
</feature>
<feature type="disulfide bond" evidence="2">
    <location>
        <begin position="68"/>
        <end position="342"/>
    </location>
</feature>
<feature type="disulfide bond" evidence="2">
    <location>
        <begin position="367"/>
        <end position="378"/>
    </location>
</feature>
<feature type="disulfide bond" evidence="2">
    <location>
        <begin position="372"/>
        <end position="411"/>
    </location>
</feature>
<feature type="disulfide bond" evidence="2">
    <location>
        <begin position="413"/>
        <end position="422"/>
    </location>
</feature>
<comment type="function">
    <text evidence="6 8">Hyaluronidase catalyzes the hydrolysis of hyaluronic acid (HA), an anionic, nonsulfated glycosaminoglycan distributed widely throughout connective, epithelial, and neural tissues (PubMed:28479398). In venom, they are known to enhance diffusion of the venom by degrading the extracellular matrix (Probable).</text>
</comment>
<comment type="catalytic activity">
    <reaction evidence="6">
        <text>Random hydrolysis of (1-&gt;4)-linkages between N-acetyl-beta-D-glucosamine and D-glucuronate residues in hyaluronate.</text>
        <dbReference type="EC" id="3.2.1.35"/>
    </reaction>
</comment>
<comment type="subcellular location">
    <subcellularLocation>
        <location evidence="6">Secreted</location>
    </subcellularLocation>
</comment>
<comment type="tissue specificity">
    <text evidence="6">Expressed by the venom duct.</text>
</comment>
<comment type="mass spectrometry">
    <text>Glycosylated.</text>
</comment>
<comment type="similarity">
    <text evidence="8">Belongs to the glycosyl hydrolase 56 family.</text>
</comment>
<organism evidence="7">
    <name type="scientific">Conus purpurascens</name>
    <name type="common">Purple cone</name>
    <dbReference type="NCBI Taxonomy" id="41690"/>
    <lineage>
        <taxon>Eukaryota</taxon>
        <taxon>Metazoa</taxon>
        <taxon>Spiralia</taxon>
        <taxon>Lophotrochozoa</taxon>
        <taxon>Mollusca</taxon>
        <taxon>Gastropoda</taxon>
        <taxon>Caenogastropoda</taxon>
        <taxon>Neogastropoda</taxon>
        <taxon>Conoidea</taxon>
        <taxon>Conidae</taxon>
        <taxon>Conus</taxon>
        <taxon>Chelyconus</taxon>
    </lineage>
</organism>
<proteinExistence type="evidence at protein level"/>
<name>HYAL_CONPU</name>
<evidence type="ECO:0000250" key="1">
    <source>
        <dbReference type="UniProtKB" id="I0CME7"/>
    </source>
</evidence>
<evidence type="ECO:0000250" key="2">
    <source>
        <dbReference type="UniProtKB" id="Q12794"/>
    </source>
</evidence>
<evidence type="ECO:0000255" key="3"/>
<evidence type="ECO:0000255" key="4">
    <source>
        <dbReference type="PROSITE-ProRule" id="PRU00498"/>
    </source>
</evidence>
<evidence type="ECO:0000256" key="5">
    <source>
        <dbReference type="SAM" id="MobiDB-lite"/>
    </source>
</evidence>
<evidence type="ECO:0000269" key="6">
    <source>
    </source>
</evidence>
<evidence type="ECO:0000303" key="7">
    <source>
    </source>
</evidence>
<evidence type="ECO:0000305" key="8"/>
<dbReference type="EC" id="3.2.1.35" evidence="6"/>
<dbReference type="SMR" id="C0HKM3"/>
<dbReference type="iPTMnet" id="C0HKM3"/>
<dbReference type="GO" id="GO:0005576">
    <property type="term" value="C:extracellular region"/>
    <property type="evidence" value="ECO:0000314"/>
    <property type="project" value="UniProtKB"/>
</dbReference>
<dbReference type="GO" id="GO:0004415">
    <property type="term" value="F:hyalurononglucosaminidase activity"/>
    <property type="evidence" value="ECO:0000314"/>
    <property type="project" value="UniProtKB"/>
</dbReference>
<dbReference type="GO" id="GO:0005975">
    <property type="term" value="P:carbohydrate metabolic process"/>
    <property type="evidence" value="ECO:0007669"/>
    <property type="project" value="InterPro"/>
</dbReference>
<dbReference type="GO" id="GO:0030214">
    <property type="term" value="P:hyaluronan catabolic process"/>
    <property type="evidence" value="ECO:0007669"/>
    <property type="project" value="TreeGrafter"/>
</dbReference>
<dbReference type="FunFam" id="3.20.20.70:FF:000065">
    <property type="entry name" value="Hyaluronidase"/>
    <property type="match status" value="1"/>
</dbReference>
<dbReference type="Gene3D" id="3.20.20.70">
    <property type="entry name" value="Aldolase class I"/>
    <property type="match status" value="1"/>
</dbReference>
<dbReference type="InterPro" id="IPR013785">
    <property type="entry name" value="Aldolase_TIM"/>
</dbReference>
<dbReference type="InterPro" id="IPR017853">
    <property type="entry name" value="Glycoside_hydrolase_SF"/>
</dbReference>
<dbReference type="InterPro" id="IPR018155">
    <property type="entry name" value="Hyaluronidase"/>
</dbReference>
<dbReference type="PANTHER" id="PTHR11769">
    <property type="entry name" value="HYALURONIDASE"/>
    <property type="match status" value="1"/>
</dbReference>
<dbReference type="PANTHER" id="PTHR11769:SF35">
    <property type="entry name" value="HYALURONIDASE"/>
    <property type="match status" value="1"/>
</dbReference>
<dbReference type="Pfam" id="PF01630">
    <property type="entry name" value="Glyco_hydro_56"/>
    <property type="match status" value="1"/>
</dbReference>
<dbReference type="PRINTS" id="PR00846">
    <property type="entry name" value="GLHYDRLASE56"/>
</dbReference>
<dbReference type="SUPFAM" id="SSF51445">
    <property type="entry name" value="(Trans)glycosidases"/>
    <property type="match status" value="1"/>
</dbReference>
<dbReference type="PROSITE" id="PS00022">
    <property type="entry name" value="EGF_1"/>
    <property type="match status" value="1"/>
</dbReference>
<protein>
    <recommendedName>
        <fullName evidence="7">Hyaluronidase conohyal-P1</fullName>
        <ecNumber evidence="6">3.2.1.35</ecNumber>
    </recommendedName>
    <alternativeName>
        <fullName evidence="1">Hyaluronoglucosaminidase</fullName>
    </alternativeName>
</protein>
<sequence>MRVVVVVTGLVVVVVATALSLPDHDVKSASSPLSSSSVYQGSSGDDCDEGLPPPDRPFYVVWNHPDTCKRNRIPLHLDHYGFIFNKNRLFLGEEIQTLYNTGLWPNISETGEFFNGGLPQLFTHHDYSETVEILGRYRTENFTGLGILDFEEWRAIYDTNFGIMRKYQDESIKLAKQRYPSYNKKELTMVAEQEWDQAAREIMSTKLAIGQALMPGGHWGYYGYPRTWGSKRNTQLRNNRIDWLWRQSTGLYPSIYIKDPNMTESAIAEFVSGNVEEAVRVQDEFSPPNTPIYPYAMLQSGDHIFFQVDHLKISLGLPAKMGTSGVILWASSNRYKNATRQCSRMRVHIDNVLGPYVENLTQVMADCSTTLCGGHGRCVHNSHDVLLGETDSQRLSGLCTPRHSRFRDYHCRCYSDWEGACCQTVRPSRCHKQQQGNVHEGGDLQEGHVVNVVNPLIG</sequence>